<proteinExistence type="inferred from homology"/>
<accession>Q1IAY6</accession>
<keyword id="KW-0349">Heme</keyword>
<keyword id="KW-0376">Hydrogen peroxide</keyword>
<keyword id="KW-0408">Iron</keyword>
<keyword id="KW-0479">Metal-binding</keyword>
<keyword id="KW-0560">Oxidoreductase</keyword>
<keyword id="KW-0575">Peroxidase</keyword>
<feature type="chain" id="PRO_0000354862" description="Catalase-peroxidase">
    <location>
        <begin position="1"/>
        <end position="744"/>
    </location>
</feature>
<feature type="region of interest" description="Disordered" evidence="2">
    <location>
        <begin position="1"/>
        <end position="21"/>
    </location>
</feature>
<feature type="region of interest" description="Disordered" evidence="2">
    <location>
        <begin position="361"/>
        <end position="387"/>
    </location>
</feature>
<feature type="active site" description="Proton acceptor" evidence="1">
    <location>
        <position position="92"/>
    </location>
</feature>
<feature type="binding site" description="axial binding residue" evidence="1">
    <location>
        <position position="282"/>
    </location>
    <ligand>
        <name>heme b</name>
        <dbReference type="ChEBI" id="CHEBI:60344"/>
    </ligand>
    <ligandPart>
        <name>Fe</name>
        <dbReference type="ChEBI" id="CHEBI:18248"/>
    </ligandPart>
</feature>
<feature type="site" description="Transition state stabilizer" evidence="1">
    <location>
        <position position="88"/>
    </location>
</feature>
<feature type="cross-link" description="Tryptophyl-tyrosyl-methioninium (Trp-Tyr) (with M-267)" evidence="1">
    <location>
        <begin position="91"/>
        <end position="241"/>
    </location>
</feature>
<feature type="cross-link" description="Tryptophyl-tyrosyl-methioninium (Tyr-Met) (with W-91)" evidence="1">
    <location>
        <begin position="241"/>
        <end position="267"/>
    </location>
</feature>
<organism>
    <name type="scientific">Pseudomonas entomophila (strain L48)</name>
    <dbReference type="NCBI Taxonomy" id="384676"/>
    <lineage>
        <taxon>Bacteria</taxon>
        <taxon>Pseudomonadati</taxon>
        <taxon>Pseudomonadota</taxon>
        <taxon>Gammaproteobacteria</taxon>
        <taxon>Pseudomonadales</taxon>
        <taxon>Pseudomonadaceae</taxon>
        <taxon>Pseudomonas</taxon>
    </lineage>
</organism>
<protein>
    <recommendedName>
        <fullName evidence="1">Catalase-peroxidase</fullName>
        <shortName evidence="1">CP</shortName>
        <ecNumber evidence="1">1.11.1.21</ecNumber>
    </recommendedName>
    <alternativeName>
        <fullName evidence="1">Peroxidase/catalase</fullName>
    </alternativeName>
</protein>
<gene>
    <name evidence="1" type="primary">katG</name>
    <name type="ordered locus">PSEEN2372</name>
</gene>
<dbReference type="EC" id="1.11.1.21" evidence="1"/>
<dbReference type="EMBL" id="CT573326">
    <property type="protein sequence ID" value="CAK15180.1"/>
    <property type="molecule type" value="Genomic_DNA"/>
</dbReference>
<dbReference type="RefSeq" id="WP_011533580.1">
    <property type="nucleotide sequence ID" value="NC_008027.1"/>
</dbReference>
<dbReference type="SMR" id="Q1IAY6"/>
<dbReference type="STRING" id="384676.PSEEN2372"/>
<dbReference type="GeneID" id="32805554"/>
<dbReference type="KEGG" id="pen:PSEEN2372"/>
<dbReference type="eggNOG" id="COG0376">
    <property type="taxonomic scope" value="Bacteria"/>
</dbReference>
<dbReference type="HOGENOM" id="CLU_025424_2_0_6"/>
<dbReference type="OrthoDB" id="9759743at2"/>
<dbReference type="Proteomes" id="UP000000658">
    <property type="component" value="Chromosome"/>
</dbReference>
<dbReference type="GO" id="GO:0005829">
    <property type="term" value="C:cytosol"/>
    <property type="evidence" value="ECO:0007669"/>
    <property type="project" value="TreeGrafter"/>
</dbReference>
<dbReference type="GO" id="GO:0004096">
    <property type="term" value="F:catalase activity"/>
    <property type="evidence" value="ECO:0007669"/>
    <property type="project" value="UniProtKB-UniRule"/>
</dbReference>
<dbReference type="GO" id="GO:0020037">
    <property type="term" value="F:heme binding"/>
    <property type="evidence" value="ECO:0007669"/>
    <property type="project" value="InterPro"/>
</dbReference>
<dbReference type="GO" id="GO:0046872">
    <property type="term" value="F:metal ion binding"/>
    <property type="evidence" value="ECO:0007669"/>
    <property type="project" value="UniProtKB-KW"/>
</dbReference>
<dbReference type="GO" id="GO:0070301">
    <property type="term" value="P:cellular response to hydrogen peroxide"/>
    <property type="evidence" value="ECO:0007669"/>
    <property type="project" value="TreeGrafter"/>
</dbReference>
<dbReference type="GO" id="GO:0042744">
    <property type="term" value="P:hydrogen peroxide catabolic process"/>
    <property type="evidence" value="ECO:0007669"/>
    <property type="project" value="UniProtKB-KW"/>
</dbReference>
<dbReference type="CDD" id="cd00649">
    <property type="entry name" value="catalase_peroxidase_1"/>
    <property type="match status" value="1"/>
</dbReference>
<dbReference type="CDD" id="cd08200">
    <property type="entry name" value="catalase_peroxidase_2"/>
    <property type="match status" value="1"/>
</dbReference>
<dbReference type="FunFam" id="1.10.420.10:FF:000002">
    <property type="entry name" value="Catalase-peroxidase"/>
    <property type="match status" value="1"/>
</dbReference>
<dbReference type="FunFam" id="1.10.420.10:FF:000004">
    <property type="entry name" value="Catalase-peroxidase"/>
    <property type="match status" value="1"/>
</dbReference>
<dbReference type="FunFam" id="1.10.520.10:FF:000002">
    <property type="entry name" value="Catalase-peroxidase"/>
    <property type="match status" value="1"/>
</dbReference>
<dbReference type="Gene3D" id="1.10.520.10">
    <property type="match status" value="2"/>
</dbReference>
<dbReference type="Gene3D" id="1.10.420.10">
    <property type="entry name" value="Peroxidase, domain 2"/>
    <property type="match status" value="2"/>
</dbReference>
<dbReference type="HAMAP" id="MF_01961">
    <property type="entry name" value="Catal_peroxid"/>
    <property type="match status" value="1"/>
</dbReference>
<dbReference type="InterPro" id="IPR000763">
    <property type="entry name" value="Catalase_peroxidase"/>
</dbReference>
<dbReference type="InterPro" id="IPR002016">
    <property type="entry name" value="Haem_peroxidase"/>
</dbReference>
<dbReference type="InterPro" id="IPR010255">
    <property type="entry name" value="Haem_peroxidase_sf"/>
</dbReference>
<dbReference type="InterPro" id="IPR019794">
    <property type="entry name" value="Peroxidases_AS"/>
</dbReference>
<dbReference type="InterPro" id="IPR019793">
    <property type="entry name" value="Peroxidases_heam-ligand_BS"/>
</dbReference>
<dbReference type="NCBIfam" id="TIGR00198">
    <property type="entry name" value="cat_per_HPI"/>
    <property type="match status" value="1"/>
</dbReference>
<dbReference type="NCBIfam" id="NF011635">
    <property type="entry name" value="PRK15061.1"/>
    <property type="match status" value="1"/>
</dbReference>
<dbReference type="PANTHER" id="PTHR30555:SF0">
    <property type="entry name" value="CATALASE-PEROXIDASE"/>
    <property type="match status" value="1"/>
</dbReference>
<dbReference type="PANTHER" id="PTHR30555">
    <property type="entry name" value="HYDROPEROXIDASE I, BIFUNCTIONAL CATALASE-PEROXIDASE"/>
    <property type="match status" value="1"/>
</dbReference>
<dbReference type="Pfam" id="PF00141">
    <property type="entry name" value="peroxidase"/>
    <property type="match status" value="2"/>
</dbReference>
<dbReference type="PRINTS" id="PR00460">
    <property type="entry name" value="BPEROXIDASE"/>
</dbReference>
<dbReference type="PRINTS" id="PR00458">
    <property type="entry name" value="PEROXIDASE"/>
</dbReference>
<dbReference type="SUPFAM" id="SSF48113">
    <property type="entry name" value="Heme-dependent peroxidases"/>
    <property type="match status" value="2"/>
</dbReference>
<dbReference type="PROSITE" id="PS00435">
    <property type="entry name" value="PEROXIDASE_1"/>
    <property type="match status" value="1"/>
</dbReference>
<dbReference type="PROSITE" id="PS00436">
    <property type="entry name" value="PEROXIDASE_2"/>
    <property type="match status" value="1"/>
</dbReference>
<dbReference type="PROSITE" id="PS50873">
    <property type="entry name" value="PEROXIDASE_4"/>
    <property type="match status" value="2"/>
</dbReference>
<reference key="1">
    <citation type="journal article" date="2006" name="Nat. Biotechnol.">
        <title>Complete genome sequence of the entomopathogenic and metabolically versatile soil bacterium Pseudomonas entomophila.</title>
        <authorList>
            <person name="Vodovar N."/>
            <person name="Vallenet D."/>
            <person name="Cruveiller S."/>
            <person name="Rouy Z."/>
            <person name="Barbe V."/>
            <person name="Acosta C."/>
            <person name="Cattolico L."/>
            <person name="Jubin C."/>
            <person name="Lajus A."/>
            <person name="Segurens B."/>
            <person name="Vacherie B."/>
            <person name="Wincker P."/>
            <person name="Weissenbach J."/>
            <person name="Lemaitre B."/>
            <person name="Medigue C."/>
            <person name="Boccard F."/>
        </authorList>
    </citation>
    <scope>NUCLEOTIDE SEQUENCE [LARGE SCALE GENOMIC DNA]</scope>
    <source>
        <strain>L48</strain>
    </source>
</reference>
<evidence type="ECO:0000255" key="1">
    <source>
        <dbReference type="HAMAP-Rule" id="MF_01961"/>
    </source>
</evidence>
<evidence type="ECO:0000256" key="2">
    <source>
        <dbReference type="SAM" id="MobiDB-lite"/>
    </source>
</evidence>
<name>KATG_PSEE4</name>
<comment type="function">
    <text evidence="1">Bifunctional enzyme with both catalase and broad-spectrum peroxidase activity.</text>
</comment>
<comment type="catalytic activity">
    <reaction evidence="1">
        <text>H2O2 + AH2 = A + 2 H2O</text>
        <dbReference type="Rhea" id="RHEA:30275"/>
        <dbReference type="ChEBI" id="CHEBI:13193"/>
        <dbReference type="ChEBI" id="CHEBI:15377"/>
        <dbReference type="ChEBI" id="CHEBI:16240"/>
        <dbReference type="ChEBI" id="CHEBI:17499"/>
        <dbReference type="EC" id="1.11.1.21"/>
    </reaction>
</comment>
<comment type="catalytic activity">
    <reaction evidence="1">
        <text>2 H2O2 = O2 + 2 H2O</text>
        <dbReference type="Rhea" id="RHEA:20309"/>
        <dbReference type="ChEBI" id="CHEBI:15377"/>
        <dbReference type="ChEBI" id="CHEBI:15379"/>
        <dbReference type="ChEBI" id="CHEBI:16240"/>
        <dbReference type="EC" id="1.11.1.21"/>
    </reaction>
</comment>
<comment type="cofactor">
    <cofactor evidence="1">
        <name>heme b</name>
        <dbReference type="ChEBI" id="CHEBI:60344"/>
    </cofactor>
    <text evidence="1">Binds 1 heme b (iron(II)-protoporphyrin IX) group per dimer.</text>
</comment>
<comment type="subunit">
    <text evidence="1">Homodimer or homotetramer.</text>
</comment>
<comment type="PTM">
    <text evidence="1">Formation of the three residue Trp-Tyr-Met cross-link is important for the catalase, but not the peroxidase activity of the enzyme.</text>
</comment>
<comment type="similarity">
    <text evidence="1">Belongs to the peroxidase family. Peroxidase/catalase subfamily.</text>
</comment>
<sequence length="744" mass="81082">MANESKCPFHQTAGGGTSNRDWWPDQLNLKILHQHSRKSDPMDPDFDYAKAFKSLDFQALKKDLTALMTDSQDWWPADFGHYGPLFIRMAWHSAGTYRIGDGRGGAGSGQQRFAPLNSWPDNVSLDKARRLLWPIKQKYGNKISWADLIVLTGNVALESMGFKTFGFSGGRADVWEPDEDVYWGSEKVWLGGDTRYGKAEAPGKGDLVAEPAKRPQEQGRNLAGERNLENPLAAVQMGLIYVNPEGPEGNPDPVASGKDIRDTFGRMAMNDEETVALIAGGHAFGKTHGAGPADNVGAEPEAAGLEQQGFGWHNTFGTGKGGDTITSGLEVTWTSTPTKWSNEYLNNLFNFEWELTKSPAGAHQWRPKDGKGANTVPDAHDTTKRHAPSMLTSDLALRFDPIYEPIARRFKDNPDQLADAFARAWYKLIHRDMGPLARYLGPEMPNEELLWQDPLPKAGPQPSEADIAAHKAKVLASGLSVAELVSTAWASASTFRGSDKRGGANGARLRLAPQKDWAANQGLDKVLAALEKIRDEGGNKISLADLIVLAGSAAVEKAAKDAGHAISVPFHPGRVDASQAQTDVESFAVLEPLADGFRNFSKARYSVKAEKLLLDKAQLLTLTAPELTVLVGGLRVLGANHGGSKEGVFTDKPGVLTNDFFRNLLDMGVEWKPTSADNEHFEGRDRKTGAVKWTGSRVDLVFGSHAQLRALSEVYGSGDAAAKFVKDFVAAWVKVMELDRFDLK</sequence>